<sequence>MRSIRSFANDDRHVMVKHSTIYPSPEELEAVQNMVSTVECALKHVSDWMDEKNKSVKCEGDVEAKEEAAESNAKDQSGRTLCGVMRIGLVAKGLLIKDDMDLELVLMCKEKPTKTLLCIVKDNLPIQIQKLTEEKYLVEEHVNEAAIIIRNTKEPKLTLKVILTSPLIRDEAEKKEGDSVAMKDPPDLLDRQKCLEALASLRHAKWFQARANGLKSCVIVLRILRDLCNRVPTWAPLKGWPLELICEKSIGTCNRPLGAGEALRRVMECLASGILLPGGPGLHDPCEREPTDALSDMTVQQKEAITHSAQHALRLSAFGQIYKVLEMDPLPSNKSFQKYSWSVADKEGTGSSALKRPFEDGVGDDKDPNKKMKRNLRKILDSKAIDLMNALMRLNQIRPGLQYKLLSQSGPVHAPVFTMSVDVDGTTYEASGPSKKTAKLHVAVKVLQAMGYPTGFDADVECVSSDEKSDNEGKNETVSSISSNNTGNSTADTSATLEVRTQGPILTASGKNPVMELNEKRRGLKYELISETGGSHDKRFVMEVEVDGQKFRGAGPNKKVAKASAALAALEKLFSGPNAANNKKKKILPQQTKGVVNTAVSAAVQAVRGRGRGALTRGAFVGAAAATGYITPGYGAPYGYSTAAPAYGLPKRMVLLPVMKFPTYPVPHYSFF</sequence>
<reference key="1">
    <citation type="journal article" date="2005" name="Genome Biol.">
        <title>Full-length cDNAs from chicken bursal lymphocytes to facilitate gene function analysis.</title>
        <authorList>
            <person name="Caldwell R.B."/>
            <person name="Kierzek A.M."/>
            <person name="Arakawa H."/>
            <person name="Bezzubov Y."/>
            <person name="Zaim J."/>
            <person name="Fiedler P."/>
            <person name="Kutter S."/>
            <person name="Blagodatski A."/>
            <person name="Kostovska D."/>
            <person name="Koter M."/>
            <person name="Plachy J."/>
            <person name="Carninci P."/>
            <person name="Hayashizaki Y."/>
            <person name="Buerstedde J.-M."/>
        </authorList>
    </citation>
    <scope>NUCLEOTIDE SEQUENCE [LARGE SCALE MRNA]</scope>
    <source>
        <strain>CB</strain>
        <tissue>Bursa of Fabricius</tissue>
    </source>
</reference>
<organism>
    <name type="scientific">Gallus gallus</name>
    <name type="common">Chicken</name>
    <dbReference type="NCBI Taxonomy" id="9031"/>
    <lineage>
        <taxon>Eukaryota</taxon>
        <taxon>Metazoa</taxon>
        <taxon>Chordata</taxon>
        <taxon>Craniata</taxon>
        <taxon>Vertebrata</taxon>
        <taxon>Euteleostomi</taxon>
        <taxon>Archelosauria</taxon>
        <taxon>Archosauria</taxon>
        <taxon>Dinosauria</taxon>
        <taxon>Saurischia</taxon>
        <taxon>Theropoda</taxon>
        <taxon>Coelurosauria</taxon>
        <taxon>Aves</taxon>
        <taxon>Neognathae</taxon>
        <taxon>Galloanserae</taxon>
        <taxon>Galliformes</taxon>
        <taxon>Phasianidae</taxon>
        <taxon>Phasianinae</taxon>
        <taxon>Gallus</taxon>
    </lineage>
</organism>
<gene>
    <name type="primary">STRBP</name>
    <name type="ORF">RCJMB04_25e3</name>
</gene>
<name>STRBP_CHICK</name>
<protein>
    <recommendedName>
        <fullName>Spermatid perinuclear RNA-binding protein</fullName>
    </recommendedName>
</protein>
<keyword id="KW-0963">Cytoplasm</keyword>
<keyword id="KW-0217">Developmental protein</keyword>
<keyword id="KW-0221">Differentiation</keyword>
<keyword id="KW-0238">DNA-binding</keyword>
<keyword id="KW-1185">Reference proteome</keyword>
<keyword id="KW-0677">Repeat</keyword>
<keyword id="KW-0694">RNA-binding</keyword>
<keyword id="KW-0744">Spermatogenesis</keyword>
<evidence type="ECO:0000250" key="1"/>
<evidence type="ECO:0000255" key="2">
    <source>
        <dbReference type="PROSITE-ProRule" id="PRU00266"/>
    </source>
</evidence>
<evidence type="ECO:0000255" key="3">
    <source>
        <dbReference type="PROSITE-ProRule" id="PRU01040"/>
    </source>
</evidence>
<evidence type="ECO:0000256" key="4">
    <source>
        <dbReference type="SAM" id="MobiDB-lite"/>
    </source>
</evidence>
<comment type="function">
    <text evidence="1">May be involved in normal spermatogenesis and sperm function. Binds to double-stranded DNA and RNA (By similarity).</text>
</comment>
<comment type="subcellular location">
    <subcellularLocation>
        <location evidence="1">Cytoplasm</location>
    </subcellularLocation>
</comment>
<dbReference type="EMBL" id="AJ720770">
    <property type="protein sequence ID" value="CAG32429.1"/>
    <property type="molecule type" value="mRNA"/>
</dbReference>
<dbReference type="RefSeq" id="NP_001025851.1">
    <property type="nucleotide sequence ID" value="NM_001030680.2"/>
</dbReference>
<dbReference type="RefSeq" id="XP_046757700.1">
    <property type="nucleotide sequence ID" value="XM_046901744.1"/>
</dbReference>
<dbReference type="RefSeq" id="XP_046757701.1">
    <property type="nucleotide sequence ID" value="XM_046901745.1"/>
</dbReference>
<dbReference type="RefSeq" id="XP_046757702.1">
    <property type="nucleotide sequence ID" value="XM_046901746.1"/>
</dbReference>
<dbReference type="RefSeq" id="XP_046757703.1">
    <property type="nucleotide sequence ID" value="XM_046901747.1"/>
</dbReference>
<dbReference type="RefSeq" id="XP_046757704.1">
    <property type="nucleotide sequence ID" value="XM_046901748.1"/>
</dbReference>
<dbReference type="RefSeq" id="XP_046757705.1">
    <property type="nucleotide sequence ID" value="XM_046901749.1"/>
</dbReference>
<dbReference type="RefSeq" id="XP_046784833.1">
    <property type="nucleotide sequence ID" value="XM_046928877.1"/>
</dbReference>
<dbReference type="RefSeq" id="XP_046784834.1">
    <property type="nucleotide sequence ID" value="XM_046928878.1"/>
</dbReference>
<dbReference type="RefSeq" id="XP_046784835.1">
    <property type="nucleotide sequence ID" value="XM_046928879.1"/>
</dbReference>
<dbReference type="RefSeq" id="XP_046784836.1">
    <property type="nucleotide sequence ID" value="XM_046928880.1"/>
</dbReference>
<dbReference type="RefSeq" id="XP_046784837.1">
    <property type="nucleotide sequence ID" value="XM_046928881.1"/>
</dbReference>
<dbReference type="RefSeq" id="XP_046784838.1">
    <property type="nucleotide sequence ID" value="XM_046928882.1"/>
</dbReference>
<dbReference type="SMR" id="Q5ZIL4"/>
<dbReference type="FunCoup" id="Q5ZIL4">
    <property type="interactions" value="629"/>
</dbReference>
<dbReference type="STRING" id="9031.ENSGALP00000053063"/>
<dbReference type="GlyGen" id="Q5ZIL4">
    <property type="glycosylation" value="1 site"/>
</dbReference>
<dbReference type="PaxDb" id="9031-ENSGALP00000001800"/>
<dbReference type="GeneID" id="417105"/>
<dbReference type="KEGG" id="gga:417105"/>
<dbReference type="CTD" id="55342"/>
<dbReference type="VEuPathDB" id="HostDB:geneid_417105"/>
<dbReference type="eggNOG" id="KOG3792">
    <property type="taxonomic scope" value="Eukaryota"/>
</dbReference>
<dbReference type="HOGENOM" id="CLU_015490_1_0_1"/>
<dbReference type="InParanoid" id="Q5ZIL4"/>
<dbReference type="OrthoDB" id="8898434at2759"/>
<dbReference type="PhylomeDB" id="Q5ZIL4"/>
<dbReference type="PRO" id="PR:Q5ZIL4"/>
<dbReference type="Proteomes" id="UP000000539">
    <property type="component" value="Chromosome 17"/>
</dbReference>
<dbReference type="Bgee" id="ENSGALG00000029927">
    <property type="expression patterns" value="Expressed in ovary and 13 other cell types or tissues"/>
</dbReference>
<dbReference type="GO" id="GO:0005737">
    <property type="term" value="C:cytoplasm"/>
    <property type="evidence" value="ECO:0007669"/>
    <property type="project" value="UniProtKB-SubCell"/>
</dbReference>
<dbReference type="GO" id="GO:0003677">
    <property type="term" value="F:DNA binding"/>
    <property type="evidence" value="ECO:0007669"/>
    <property type="project" value="UniProtKB-KW"/>
</dbReference>
<dbReference type="GO" id="GO:0003725">
    <property type="term" value="F:double-stranded RNA binding"/>
    <property type="evidence" value="ECO:0000318"/>
    <property type="project" value="GO_Central"/>
</dbReference>
<dbReference type="GO" id="GO:0003727">
    <property type="term" value="F:single-stranded RNA binding"/>
    <property type="evidence" value="ECO:0000318"/>
    <property type="project" value="GO_Central"/>
</dbReference>
<dbReference type="GO" id="GO:0030154">
    <property type="term" value="P:cell differentiation"/>
    <property type="evidence" value="ECO:0007669"/>
    <property type="project" value="UniProtKB-KW"/>
</dbReference>
<dbReference type="GO" id="GO:0007283">
    <property type="term" value="P:spermatogenesis"/>
    <property type="evidence" value="ECO:0007669"/>
    <property type="project" value="UniProtKB-KW"/>
</dbReference>
<dbReference type="CDD" id="cd19897">
    <property type="entry name" value="DSRM_STRBP-like_rpt2"/>
    <property type="match status" value="1"/>
</dbReference>
<dbReference type="CDD" id="cd19909">
    <property type="entry name" value="DSRM_STRBP_rpt1"/>
    <property type="match status" value="1"/>
</dbReference>
<dbReference type="FunFam" id="1.10.1410.40:FF:000001">
    <property type="entry name" value="interleukin enhancer-binding factor 3 isoform X1"/>
    <property type="match status" value="1"/>
</dbReference>
<dbReference type="FunFam" id="3.30.160.20:FF:000006">
    <property type="entry name" value="interleukin enhancer-binding factor 3 isoform X2"/>
    <property type="match status" value="1"/>
</dbReference>
<dbReference type="FunFam" id="3.30.160.20:FF:000008">
    <property type="entry name" value="interleukin enhancer-binding factor 3 isoform X2"/>
    <property type="match status" value="1"/>
</dbReference>
<dbReference type="FunFam" id="3.30.460.10:FF:000003">
    <property type="entry name" value="interleukin enhancer-binding factor 3 isoform X2"/>
    <property type="match status" value="1"/>
</dbReference>
<dbReference type="Gene3D" id="1.10.1410.40">
    <property type="match status" value="1"/>
</dbReference>
<dbReference type="Gene3D" id="3.30.160.20">
    <property type="match status" value="2"/>
</dbReference>
<dbReference type="Gene3D" id="3.30.460.10">
    <property type="entry name" value="Beta Polymerase, domain 2"/>
    <property type="match status" value="1"/>
</dbReference>
<dbReference type="InterPro" id="IPR014720">
    <property type="entry name" value="dsRBD_dom"/>
</dbReference>
<dbReference type="InterPro" id="IPR006561">
    <property type="entry name" value="DZF_dom"/>
</dbReference>
<dbReference type="InterPro" id="IPR049402">
    <property type="entry name" value="DZF_dom_C"/>
</dbReference>
<dbReference type="InterPro" id="IPR049401">
    <property type="entry name" value="DZF_dom_N"/>
</dbReference>
<dbReference type="InterPro" id="IPR043519">
    <property type="entry name" value="NT_sf"/>
</dbReference>
<dbReference type="InterPro" id="IPR044472">
    <property type="entry name" value="STRBP_DSRM_1"/>
</dbReference>
<dbReference type="PANTHER" id="PTHR45762:SF1">
    <property type="entry name" value="SPERMATID PERINUCLEAR RNA-BINDING PROTEIN"/>
    <property type="match status" value="1"/>
</dbReference>
<dbReference type="PANTHER" id="PTHR45762">
    <property type="entry name" value="ZINC FINGER RNA-BINDING PROTEIN"/>
    <property type="match status" value="1"/>
</dbReference>
<dbReference type="Pfam" id="PF00035">
    <property type="entry name" value="dsrm"/>
    <property type="match status" value="2"/>
</dbReference>
<dbReference type="Pfam" id="PF20965">
    <property type="entry name" value="DZF_C"/>
    <property type="match status" value="1"/>
</dbReference>
<dbReference type="Pfam" id="PF07528">
    <property type="entry name" value="DZF_N"/>
    <property type="match status" value="1"/>
</dbReference>
<dbReference type="SMART" id="SM00358">
    <property type="entry name" value="DSRM"/>
    <property type="match status" value="2"/>
</dbReference>
<dbReference type="SMART" id="SM00572">
    <property type="entry name" value="DZF"/>
    <property type="match status" value="1"/>
</dbReference>
<dbReference type="SUPFAM" id="SSF54768">
    <property type="entry name" value="dsRNA-binding domain-like"/>
    <property type="match status" value="2"/>
</dbReference>
<dbReference type="PROSITE" id="PS50137">
    <property type="entry name" value="DS_RBD"/>
    <property type="match status" value="2"/>
</dbReference>
<dbReference type="PROSITE" id="PS51703">
    <property type="entry name" value="DZF"/>
    <property type="match status" value="1"/>
</dbReference>
<feature type="chain" id="PRO_0000274921" description="Spermatid perinuclear RNA-binding protein">
    <location>
        <begin position="1"/>
        <end position="672"/>
    </location>
</feature>
<feature type="domain" description="DZF" evidence="3">
    <location>
        <begin position="5"/>
        <end position="362"/>
    </location>
</feature>
<feature type="domain" description="DRBM 1" evidence="2">
    <location>
        <begin position="386"/>
        <end position="452"/>
    </location>
</feature>
<feature type="domain" description="DRBM 2" evidence="2">
    <location>
        <begin position="509"/>
        <end position="575"/>
    </location>
</feature>
<feature type="region of interest" description="Disordered" evidence="4">
    <location>
        <begin position="348"/>
        <end position="370"/>
    </location>
</feature>
<feature type="region of interest" description="Disordered" evidence="4">
    <location>
        <begin position="463"/>
        <end position="494"/>
    </location>
</feature>
<feature type="compositionally biased region" description="Basic and acidic residues" evidence="4">
    <location>
        <begin position="356"/>
        <end position="370"/>
    </location>
</feature>
<feature type="compositionally biased region" description="Basic and acidic residues" evidence="4">
    <location>
        <begin position="465"/>
        <end position="475"/>
    </location>
</feature>
<feature type="compositionally biased region" description="Low complexity" evidence="4">
    <location>
        <begin position="477"/>
        <end position="490"/>
    </location>
</feature>
<accession>Q5ZIL4</accession>
<proteinExistence type="evidence at transcript level"/>